<name>TOM34_RAT</name>
<comment type="function">
    <text evidence="1">Plays a role in the import of cytosolically synthesized preproteins into mitochondria. Binds the mature portion of precursor proteins. Interacts with cellular components, and possesses weak ATPase activity. May be a chaperone-like protein that helps to keep newly synthesized precursors in an unfolded import compatible state (By similarity).</text>
</comment>
<comment type="subunit">
    <text evidence="1">Interacts with HSP90A, VCP, ATP6V1D, KIAA0665, AMPK, and DMAP1 through its TPR repeat.</text>
</comment>
<comment type="subcellular location">
    <subcellularLocation>
        <location evidence="1">Cytoplasm</location>
    </subcellularLocation>
    <subcellularLocation>
        <location evidence="1">Mitochondrion outer membrane</location>
        <topology evidence="1">Peripheral membrane protein</topology>
        <orientation evidence="1">Cytoplasmic side</orientation>
    </subcellularLocation>
</comment>
<comment type="similarity">
    <text evidence="4">Belongs to the Tom34 family.</text>
</comment>
<sequence>MAPKVSDSVEQLRAAGNQNFRNGQYGEASALYERALRLLQARGSADPEEESVLYSNRAACYLKDGNCTDCIKDCTSALALVPFSIKPLLRRASAYEALEKYSLAYVDYKTVLQIDNSVASALEGINRITRALMDSLGPEWRLKLPPIPVVPVSAQKRWSSLPSENHKETAKSKSKETTATKNRVPSAGDVERARVLKEEGNELVKKGNHKKAIEKYSESLLFSSLESATYSNRALCHLVLKQYKEAEKDCTEALKLDGKNVKAFYRRAQAYKALKDYKSSLADISSLLQIEPRNGPAHKLRQEVNQNMN</sequence>
<proteinExistence type="evidence at protein level"/>
<accession>Q3KRD5</accession>
<reference key="1">
    <citation type="journal article" date="2004" name="Genome Res.">
        <title>The status, quality, and expansion of the NIH full-length cDNA project: the Mammalian Gene Collection (MGC).</title>
        <authorList>
            <consortium name="The MGC Project Team"/>
        </authorList>
    </citation>
    <scope>NUCLEOTIDE SEQUENCE [LARGE SCALE MRNA]</scope>
    <source>
        <tissue>Prostate</tissue>
    </source>
</reference>
<reference key="2">
    <citation type="journal article" date="2006" name="Proc. Natl. Acad. Sci. U.S.A.">
        <title>Quantitative phosphoproteomics of vasopressin-sensitive renal cells: regulation of aquaporin-2 phosphorylation at two sites.</title>
        <authorList>
            <person name="Hoffert J.D."/>
            <person name="Pisitkun T."/>
            <person name="Wang G."/>
            <person name="Shen R.-F."/>
            <person name="Knepper M.A."/>
        </authorList>
    </citation>
    <scope>PHOSPHORYLATION [LARGE SCALE ANALYSIS] AT SER-186</scope>
    <scope>IDENTIFICATION BY MASS SPECTROMETRY [LARGE SCALE ANALYSIS]</scope>
</reference>
<reference key="3">
    <citation type="journal article" date="2012" name="Nat. Commun.">
        <title>Quantitative maps of protein phosphorylation sites across 14 different rat organs and tissues.</title>
        <authorList>
            <person name="Lundby A."/>
            <person name="Secher A."/>
            <person name="Lage K."/>
            <person name="Nordsborg N.B."/>
            <person name="Dmytriyev A."/>
            <person name="Lundby C."/>
            <person name="Olsen J.V."/>
        </authorList>
    </citation>
    <scope>PHOSPHORYLATION [LARGE SCALE ANALYSIS] AT SER-8 AND SER-186</scope>
    <scope>IDENTIFICATION BY MASS SPECTROMETRY [LARGE SCALE ANALYSIS]</scope>
</reference>
<protein>
    <recommendedName>
        <fullName>Mitochondrial import receptor subunit TOM34</fullName>
    </recommendedName>
    <alternativeName>
        <fullName>Translocase of outer membrane 34 kDa subunit</fullName>
    </alternativeName>
</protein>
<dbReference type="EMBL" id="BC105768">
    <property type="protein sequence ID" value="AAI05769.1"/>
    <property type="molecule type" value="mRNA"/>
</dbReference>
<dbReference type="RefSeq" id="NP_001037709.1">
    <property type="nucleotide sequence ID" value="NM_001044244.2"/>
</dbReference>
<dbReference type="SMR" id="Q3KRD5"/>
<dbReference type="FunCoup" id="Q3KRD5">
    <property type="interactions" value="1757"/>
</dbReference>
<dbReference type="STRING" id="10116.ENSRNOP00000049550"/>
<dbReference type="iPTMnet" id="Q3KRD5"/>
<dbReference type="PhosphoSitePlus" id="Q3KRD5"/>
<dbReference type="jPOST" id="Q3KRD5"/>
<dbReference type="PaxDb" id="10116-ENSRNOP00000049550"/>
<dbReference type="GeneID" id="311621"/>
<dbReference type="KEGG" id="rno:311621"/>
<dbReference type="AGR" id="RGD:1309029"/>
<dbReference type="CTD" id="10953"/>
<dbReference type="RGD" id="1309029">
    <property type="gene designation" value="Tomm34"/>
</dbReference>
<dbReference type="VEuPathDB" id="HostDB:ENSRNOG00000029799"/>
<dbReference type="eggNOG" id="KOG1124">
    <property type="taxonomic scope" value="Eukaryota"/>
</dbReference>
<dbReference type="HOGENOM" id="CLU_061396_0_0_1"/>
<dbReference type="InParanoid" id="Q3KRD5"/>
<dbReference type="OrthoDB" id="37824at9989"/>
<dbReference type="PhylomeDB" id="Q3KRD5"/>
<dbReference type="TreeFam" id="TF106202"/>
<dbReference type="PRO" id="PR:Q3KRD5"/>
<dbReference type="Proteomes" id="UP000002494">
    <property type="component" value="Chromosome 3"/>
</dbReference>
<dbReference type="Bgee" id="ENSRNOG00000029799">
    <property type="expression patterns" value="Expressed in frontal cortex and 20 other cell types or tissues"/>
</dbReference>
<dbReference type="GO" id="GO:0005829">
    <property type="term" value="C:cytosol"/>
    <property type="evidence" value="ECO:0000318"/>
    <property type="project" value="GO_Central"/>
</dbReference>
<dbReference type="GO" id="GO:0005741">
    <property type="term" value="C:mitochondrial outer membrane"/>
    <property type="evidence" value="ECO:0000266"/>
    <property type="project" value="RGD"/>
</dbReference>
<dbReference type="GO" id="GO:0005739">
    <property type="term" value="C:mitochondrion"/>
    <property type="evidence" value="ECO:0000318"/>
    <property type="project" value="GO_Central"/>
</dbReference>
<dbReference type="GO" id="GO:0031072">
    <property type="term" value="F:heat shock protein binding"/>
    <property type="evidence" value="ECO:0000266"/>
    <property type="project" value="RGD"/>
</dbReference>
<dbReference type="GO" id="GO:0006626">
    <property type="term" value="P:protein targeting to mitochondrion"/>
    <property type="evidence" value="ECO:0000266"/>
    <property type="project" value="RGD"/>
</dbReference>
<dbReference type="FunFam" id="1.25.40.10:FF:000221">
    <property type="entry name" value="Mitochondrial import receptor subunit TOM34"/>
    <property type="match status" value="1"/>
</dbReference>
<dbReference type="FunFam" id="1.25.40.10:FF:000312">
    <property type="entry name" value="Mitochondrial import receptor subunit TOM34"/>
    <property type="match status" value="1"/>
</dbReference>
<dbReference type="Gene3D" id="1.25.40.10">
    <property type="entry name" value="Tetratricopeptide repeat domain"/>
    <property type="match status" value="2"/>
</dbReference>
<dbReference type="InterPro" id="IPR051982">
    <property type="entry name" value="CiliaryAsmbly_MitoImport"/>
</dbReference>
<dbReference type="InterPro" id="IPR011990">
    <property type="entry name" value="TPR-like_helical_dom_sf"/>
</dbReference>
<dbReference type="InterPro" id="IPR019734">
    <property type="entry name" value="TPR_rpt"/>
</dbReference>
<dbReference type="PANTHER" id="PTHR45984:SF2">
    <property type="entry name" value="MITOCHONDRIAL IMPORT RECEPTOR SUBUNIT TOM34"/>
    <property type="match status" value="1"/>
</dbReference>
<dbReference type="PANTHER" id="PTHR45984">
    <property type="entry name" value="RNA (RNA) POLYMERASE II ASSOCIATED PROTEIN HOMOLOG"/>
    <property type="match status" value="1"/>
</dbReference>
<dbReference type="Pfam" id="PF00515">
    <property type="entry name" value="TPR_1"/>
    <property type="match status" value="1"/>
</dbReference>
<dbReference type="Pfam" id="PF13181">
    <property type="entry name" value="TPR_8"/>
    <property type="match status" value="1"/>
</dbReference>
<dbReference type="SMART" id="SM00028">
    <property type="entry name" value="TPR"/>
    <property type="match status" value="6"/>
</dbReference>
<dbReference type="SUPFAM" id="SSF48452">
    <property type="entry name" value="TPR-like"/>
    <property type="match status" value="2"/>
</dbReference>
<dbReference type="PROSITE" id="PS50005">
    <property type="entry name" value="TPR"/>
    <property type="match status" value="6"/>
</dbReference>
<dbReference type="PROSITE" id="PS50293">
    <property type="entry name" value="TPR_REGION"/>
    <property type="match status" value="2"/>
</dbReference>
<feature type="chain" id="PRO_0000329295" description="Mitochondrial import receptor subunit TOM34">
    <location>
        <begin position="1"/>
        <end position="309"/>
    </location>
</feature>
<feature type="repeat" description="TPR 1">
    <location>
        <begin position="9"/>
        <end position="42"/>
    </location>
</feature>
<feature type="repeat" description="TPR 2">
    <location>
        <begin position="51"/>
        <end position="84"/>
    </location>
</feature>
<feature type="repeat" description="TPR 3">
    <location>
        <begin position="86"/>
        <end position="118"/>
    </location>
</feature>
<feature type="repeat" description="TPR 4">
    <location>
        <begin position="193"/>
        <end position="226"/>
    </location>
</feature>
<feature type="repeat" description="TPR 5">
    <location>
        <begin position="227"/>
        <end position="260"/>
    </location>
</feature>
<feature type="repeat" description="TPR 6">
    <location>
        <begin position="262"/>
        <end position="294"/>
    </location>
</feature>
<feature type="region of interest" description="Disordered" evidence="3">
    <location>
        <begin position="158"/>
        <end position="187"/>
    </location>
</feature>
<feature type="compositionally biased region" description="Basic and acidic residues" evidence="3">
    <location>
        <begin position="164"/>
        <end position="178"/>
    </location>
</feature>
<feature type="modified residue" description="Phosphoserine" evidence="6">
    <location>
        <position position="8"/>
    </location>
</feature>
<feature type="modified residue" description="Phosphoserine" evidence="2">
    <location>
        <position position="160"/>
    </location>
</feature>
<feature type="modified residue" description="Phosphoserine" evidence="5 6">
    <location>
        <position position="186"/>
    </location>
</feature>
<feature type="cross-link" description="Glycyl lysine isopeptide (Lys-Gly) (interchain with G-Cter in SUMO2)" evidence="2">
    <location>
        <position position="197"/>
    </location>
</feature>
<gene>
    <name type="primary">Tomm34</name>
</gene>
<keyword id="KW-0143">Chaperone</keyword>
<keyword id="KW-0963">Cytoplasm</keyword>
<keyword id="KW-1017">Isopeptide bond</keyword>
<keyword id="KW-0472">Membrane</keyword>
<keyword id="KW-0496">Mitochondrion</keyword>
<keyword id="KW-1000">Mitochondrion outer membrane</keyword>
<keyword id="KW-0597">Phosphoprotein</keyword>
<keyword id="KW-1185">Reference proteome</keyword>
<keyword id="KW-0677">Repeat</keyword>
<keyword id="KW-0802">TPR repeat</keyword>
<keyword id="KW-0832">Ubl conjugation</keyword>
<organism>
    <name type="scientific">Rattus norvegicus</name>
    <name type="common">Rat</name>
    <dbReference type="NCBI Taxonomy" id="10116"/>
    <lineage>
        <taxon>Eukaryota</taxon>
        <taxon>Metazoa</taxon>
        <taxon>Chordata</taxon>
        <taxon>Craniata</taxon>
        <taxon>Vertebrata</taxon>
        <taxon>Euteleostomi</taxon>
        <taxon>Mammalia</taxon>
        <taxon>Eutheria</taxon>
        <taxon>Euarchontoglires</taxon>
        <taxon>Glires</taxon>
        <taxon>Rodentia</taxon>
        <taxon>Myomorpha</taxon>
        <taxon>Muroidea</taxon>
        <taxon>Muridae</taxon>
        <taxon>Murinae</taxon>
        <taxon>Rattus</taxon>
    </lineage>
</organism>
<evidence type="ECO:0000250" key="1"/>
<evidence type="ECO:0000250" key="2">
    <source>
        <dbReference type="UniProtKB" id="Q15785"/>
    </source>
</evidence>
<evidence type="ECO:0000256" key="3">
    <source>
        <dbReference type="SAM" id="MobiDB-lite"/>
    </source>
</evidence>
<evidence type="ECO:0000305" key="4"/>
<evidence type="ECO:0007744" key="5">
    <source>
    </source>
</evidence>
<evidence type="ECO:0007744" key="6">
    <source>
    </source>
</evidence>